<comment type="function">
    <text>This magnesium-dependent enzyme catalyzes the hydrolysis of ATP coupled with the transport of calcium out of the cell.</text>
</comment>
<comment type="catalytic activity">
    <reaction>
        <text>Ca(2+)(in) + ATP + H2O = Ca(2+)(out) + ADP + phosphate + H(+)</text>
        <dbReference type="Rhea" id="RHEA:18105"/>
        <dbReference type="ChEBI" id="CHEBI:15377"/>
        <dbReference type="ChEBI" id="CHEBI:15378"/>
        <dbReference type="ChEBI" id="CHEBI:29108"/>
        <dbReference type="ChEBI" id="CHEBI:30616"/>
        <dbReference type="ChEBI" id="CHEBI:43474"/>
        <dbReference type="ChEBI" id="CHEBI:456216"/>
        <dbReference type="EC" id="7.2.2.10"/>
    </reaction>
</comment>
<comment type="subcellular location">
    <subcellularLocation>
        <location evidence="1">Cell membrane</location>
        <topology evidence="1">Multi-pass membrane protein</topology>
    </subcellularLocation>
</comment>
<comment type="similarity">
    <text evidence="4">Belongs to the cation transport ATPase (P-type) (TC 3.A.3) family. Type IIB subfamily.</text>
</comment>
<keyword id="KW-0067">ATP-binding</keyword>
<keyword id="KW-0106">Calcium</keyword>
<keyword id="KW-0109">Calcium transport</keyword>
<keyword id="KW-0112">Calmodulin-binding</keyword>
<keyword id="KW-1003">Cell membrane</keyword>
<keyword id="KW-0406">Ion transport</keyword>
<keyword id="KW-0460">Magnesium</keyword>
<keyword id="KW-0472">Membrane</keyword>
<keyword id="KW-0479">Metal-binding</keyword>
<keyword id="KW-0547">Nucleotide-binding</keyword>
<keyword id="KW-0597">Phosphoprotein</keyword>
<keyword id="KW-1278">Translocase</keyword>
<keyword id="KW-0812">Transmembrane</keyword>
<keyword id="KW-1133">Transmembrane helix</keyword>
<keyword id="KW-0813">Transport</keyword>
<protein>
    <recommendedName>
        <fullName>Plasma membrane calcium-transporting ATPase 2</fullName>
        <shortName>PMCA2</shortName>
        <ecNumber>7.2.2.10</ecNumber>
    </recommendedName>
    <alternativeName>
        <fullName>Plasma membrane calcium ATPase isoform 2</fullName>
    </alternativeName>
    <alternativeName>
        <fullName>Plasma membrane calcium pump isoform 2</fullName>
    </alternativeName>
</protein>
<accession>P58165</accession>
<organism>
    <name type="scientific">Oreochromis mossambicus</name>
    <name type="common">Mozambique tilapia</name>
    <name type="synonym">Tilapia mossambica</name>
    <dbReference type="NCBI Taxonomy" id="8127"/>
    <lineage>
        <taxon>Eukaryota</taxon>
        <taxon>Metazoa</taxon>
        <taxon>Chordata</taxon>
        <taxon>Craniata</taxon>
        <taxon>Vertebrata</taxon>
        <taxon>Euteleostomi</taxon>
        <taxon>Actinopterygii</taxon>
        <taxon>Neopterygii</taxon>
        <taxon>Teleostei</taxon>
        <taxon>Neoteleostei</taxon>
        <taxon>Acanthomorphata</taxon>
        <taxon>Ovalentaria</taxon>
        <taxon>Cichlomorphae</taxon>
        <taxon>Cichliformes</taxon>
        <taxon>Cichlidae</taxon>
        <taxon>African cichlids</taxon>
        <taxon>Pseudocrenilabrinae</taxon>
        <taxon>Oreochromini</taxon>
        <taxon>Oreochromis</taxon>
    </lineage>
</organism>
<name>AT2B2_OREMO</name>
<evidence type="ECO:0000250" key="1"/>
<evidence type="ECO:0000255" key="2"/>
<evidence type="ECO:0000256" key="3">
    <source>
        <dbReference type="SAM" id="MobiDB-lite"/>
    </source>
</evidence>
<evidence type="ECO:0000305" key="4"/>
<feature type="chain" id="PRO_0000046217" description="Plasma membrane calcium-transporting ATPase 2">
    <location>
        <begin position="1"/>
        <end position="1112" status="greater than"/>
    </location>
</feature>
<feature type="topological domain" description="Cytoplasmic" evidence="2">
    <location>
        <begin position="1"/>
        <end position="94"/>
    </location>
</feature>
<feature type="transmembrane region" description="Helical" evidence="2">
    <location>
        <begin position="95"/>
        <end position="115"/>
    </location>
</feature>
<feature type="topological domain" description="Extracellular" evidence="2">
    <location>
        <begin position="116"/>
        <end position="152"/>
    </location>
</feature>
<feature type="transmembrane region" description="Helical" evidence="2">
    <location>
        <begin position="153"/>
        <end position="173"/>
    </location>
</feature>
<feature type="topological domain" description="Cytoplasmic" evidence="2">
    <location>
        <begin position="174"/>
        <end position="373"/>
    </location>
</feature>
<feature type="transmembrane region" description="Helical" evidence="2">
    <location>
        <begin position="374"/>
        <end position="393"/>
    </location>
</feature>
<feature type="topological domain" description="Extracellular" evidence="2">
    <location>
        <begin position="394"/>
        <end position="426"/>
    </location>
</feature>
<feature type="transmembrane region" description="Helical" evidence="2">
    <location>
        <begin position="427"/>
        <end position="444"/>
    </location>
</feature>
<feature type="topological domain" description="Cytoplasmic" evidence="2">
    <location>
        <begin position="445"/>
        <end position="858"/>
    </location>
</feature>
<feature type="transmembrane region" description="Helical" evidence="2">
    <location>
        <begin position="859"/>
        <end position="878"/>
    </location>
</feature>
<feature type="topological domain" description="Extracellular" evidence="2">
    <location>
        <begin position="879"/>
        <end position="888"/>
    </location>
</feature>
<feature type="transmembrane region" description="Helical" evidence="2">
    <location>
        <begin position="889"/>
        <end position="909"/>
    </location>
</feature>
<feature type="topological domain" description="Cytoplasmic" evidence="2">
    <location>
        <begin position="910"/>
        <end position="929"/>
    </location>
</feature>
<feature type="transmembrane region" description="Helical" evidence="2">
    <location>
        <begin position="930"/>
        <end position="952"/>
    </location>
</feature>
<feature type="topological domain" description="Extracellular" evidence="2">
    <location>
        <begin position="953"/>
        <end position="970"/>
    </location>
</feature>
<feature type="transmembrane region" description="Helical" evidence="2">
    <location>
        <begin position="971"/>
        <end position="992"/>
    </location>
</feature>
<feature type="topological domain" description="Cytoplasmic" evidence="2">
    <location>
        <begin position="993"/>
        <end position="1011"/>
    </location>
</feature>
<feature type="transmembrane region" description="Helical" evidence="2">
    <location>
        <begin position="1012"/>
        <end position="1033"/>
    </location>
</feature>
<feature type="topological domain" description="Extracellular" evidence="2">
    <location>
        <begin position="1034"/>
        <end position="1043"/>
    </location>
</feature>
<feature type="transmembrane region" description="Helical" evidence="2">
    <location>
        <begin position="1044"/>
        <end position="1065"/>
    </location>
</feature>
<feature type="topological domain" description="Cytoplasmic" evidence="2">
    <location>
        <begin position="1066"/>
        <end position="1112" status="greater than"/>
    </location>
</feature>
<feature type="region of interest" description="Disordered" evidence="3">
    <location>
        <begin position="298"/>
        <end position="363"/>
    </location>
</feature>
<feature type="region of interest" description="Disordered" evidence="3">
    <location>
        <begin position="1086"/>
        <end position="1112"/>
    </location>
</feature>
<feature type="region of interest" description="Calmodulin-binding subdomain A" evidence="1">
    <location>
        <begin position="1106"/>
        <end position="1112" status="greater than"/>
    </location>
</feature>
<feature type="compositionally biased region" description="Basic and acidic residues" evidence="3">
    <location>
        <begin position="298"/>
        <end position="311"/>
    </location>
</feature>
<feature type="compositionally biased region" description="Polar residues" evidence="3">
    <location>
        <begin position="312"/>
        <end position="327"/>
    </location>
</feature>
<feature type="compositionally biased region" description="Basic and acidic residues" evidence="3">
    <location>
        <begin position="351"/>
        <end position="363"/>
    </location>
</feature>
<feature type="compositionally biased region" description="Acidic residues" evidence="3">
    <location>
        <begin position="1087"/>
        <end position="1098"/>
    </location>
</feature>
<feature type="compositionally biased region" description="Basic and acidic residues" evidence="3">
    <location>
        <begin position="1099"/>
        <end position="1112"/>
    </location>
</feature>
<feature type="active site" description="4-aspartylphosphate intermediate" evidence="1">
    <location>
        <position position="482"/>
    </location>
</feature>
<feature type="binding site" evidence="1">
    <location>
        <position position="803"/>
    </location>
    <ligand>
        <name>Mg(2+)</name>
        <dbReference type="ChEBI" id="CHEBI:18420"/>
    </ligand>
</feature>
<feature type="binding site" evidence="1">
    <location>
        <position position="807"/>
    </location>
    <ligand>
        <name>Mg(2+)</name>
        <dbReference type="ChEBI" id="CHEBI:18420"/>
    </ligand>
</feature>
<feature type="non-terminal residue">
    <location>
        <position position="1112"/>
    </location>
</feature>
<dbReference type="EC" id="7.2.2.10"/>
<dbReference type="EMBL" id="AF236669">
    <property type="protein sequence ID" value="AAK15034.1"/>
    <property type="molecule type" value="mRNA"/>
</dbReference>
<dbReference type="SMR" id="P58165"/>
<dbReference type="GO" id="GO:0043231">
    <property type="term" value="C:intracellular membrane-bounded organelle"/>
    <property type="evidence" value="ECO:0007669"/>
    <property type="project" value="TreeGrafter"/>
</dbReference>
<dbReference type="GO" id="GO:0098839">
    <property type="term" value="C:postsynaptic density membrane"/>
    <property type="evidence" value="ECO:0007669"/>
    <property type="project" value="TreeGrafter"/>
</dbReference>
<dbReference type="GO" id="GO:0005524">
    <property type="term" value="F:ATP binding"/>
    <property type="evidence" value="ECO:0007669"/>
    <property type="project" value="UniProtKB-KW"/>
</dbReference>
<dbReference type="GO" id="GO:0016887">
    <property type="term" value="F:ATP hydrolysis activity"/>
    <property type="evidence" value="ECO:0007669"/>
    <property type="project" value="InterPro"/>
</dbReference>
<dbReference type="GO" id="GO:0005516">
    <property type="term" value="F:calmodulin binding"/>
    <property type="evidence" value="ECO:0007669"/>
    <property type="project" value="UniProtKB-KW"/>
</dbReference>
<dbReference type="GO" id="GO:0046872">
    <property type="term" value="F:metal ion binding"/>
    <property type="evidence" value="ECO:0007669"/>
    <property type="project" value="UniProtKB-KW"/>
</dbReference>
<dbReference type="GO" id="GO:0005388">
    <property type="term" value="F:P-type calcium transporter activity"/>
    <property type="evidence" value="ECO:0007669"/>
    <property type="project" value="UniProtKB-EC"/>
</dbReference>
<dbReference type="GO" id="GO:0030165">
    <property type="term" value="F:PDZ domain binding"/>
    <property type="evidence" value="ECO:0007669"/>
    <property type="project" value="TreeGrafter"/>
</dbReference>
<dbReference type="GO" id="GO:0051480">
    <property type="term" value="P:regulation of cytosolic calcium ion concentration"/>
    <property type="evidence" value="ECO:0007669"/>
    <property type="project" value="TreeGrafter"/>
</dbReference>
<dbReference type="CDD" id="cd02081">
    <property type="entry name" value="P-type_ATPase_Ca_PMCA-like"/>
    <property type="match status" value="1"/>
</dbReference>
<dbReference type="FunFam" id="1.20.1110.10:FF:000001">
    <property type="entry name" value="Calcium-transporting ATPase"/>
    <property type="match status" value="1"/>
</dbReference>
<dbReference type="FunFam" id="1.20.1110.10:FF:000002">
    <property type="entry name" value="Calcium-transporting ATPase"/>
    <property type="match status" value="1"/>
</dbReference>
<dbReference type="FunFam" id="1.20.1110.10:FF:000008">
    <property type="entry name" value="Calcium-transporting ATPase"/>
    <property type="match status" value="1"/>
</dbReference>
<dbReference type="FunFam" id="2.70.150.10:FF:000001">
    <property type="entry name" value="Calcium-transporting ATPase"/>
    <property type="match status" value="1"/>
</dbReference>
<dbReference type="FunFam" id="3.40.1110.10:FF:000032">
    <property type="entry name" value="Calcium-transporting ATPase"/>
    <property type="match status" value="1"/>
</dbReference>
<dbReference type="FunFam" id="3.40.50.1000:FF:000007">
    <property type="entry name" value="Calcium-transporting ATPase"/>
    <property type="match status" value="1"/>
</dbReference>
<dbReference type="Gene3D" id="3.40.1110.10">
    <property type="entry name" value="Calcium-transporting ATPase, cytoplasmic domain N"/>
    <property type="match status" value="1"/>
</dbReference>
<dbReference type="Gene3D" id="2.70.150.10">
    <property type="entry name" value="Calcium-transporting ATPase, cytoplasmic transduction domain A"/>
    <property type="match status" value="1"/>
</dbReference>
<dbReference type="Gene3D" id="1.20.1110.10">
    <property type="entry name" value="Calcium-transporting ATPase, transmembrane domain"/>
    <property type="match status" value="3"/>
</dbReference>
<dbReference type="Gene3D" id="3.40.50.1000">
    <property type="entry name" value="HAD superfamily/HAD-like"/>
    <property type="match status" value="1"/>
</dbReference>
<dbReference type="InterPro" id="IPR006068">
    <property type="entry name" value="ATPase_P-typ_cation-transptr_C"/>
</dbReference>
<dbReference type="InterPro" id="IPR004014">
    <property type="entry name" value="ATPase_P-typ_cation-transptr_N"/>
</dbReference>
<dbReference type="InterPro" id="IPR023299">
    <property type="entry name" value="ATPase_P-typ_cyto_dom_N"/>
</dbReference>
<dbReference type="InterPro" id="IPR018303">
    <property type="entry name" value="ATPase_P-typ_P_site"/>
</dbReference>
<dbReference type="InterPro" id="IPR023298">
    <property type="entry name" value="ATPase_P-typ_TM_dom_sf"/>
</dbReference>
<dbReference type="InterPro" id="IPR008250">
    <property type="entry name" value="ATPase_P-typ_transduc_dom_A_sf"/>
</dbReference>
<dbReference type="InterPro" id="IPR036412">
    <property type="entry name" value="HAD-like_sf"/>
</dbReference>
<dbReference type="InterPro" id="IPR023214">
    <property type="entry name" value="HAD_sf"/>
</dbReference>
<dbReference type="InterPro" id="IPR006408">
    <property type="entry name" value="P-type_ATPase_IIB"/>
</dbReference>
<dbReference type="InterPro" id="IPR001757">
    <property type="entry name" value="P_typ_ATPase"/>
</dbReference>
<dbReference type="InterPro" id="IPR044492">
    <property type="entry name" value="P_typ_ATPase_HD_dom"/>
</dbReference>
<dbReference type="NCBIfam" id="TIGR01517">
    <property type="entry name" value="ATPase-IIB_Ca"/>
    <property type="match status" value="1"/>
</dbReference>
<dbReference type="NCBIfam" id="TIGR01494">
    <property type="entry name" value="ATPase_P-type"/>
    <property type="match status" value="3"/>
</dbReference>
<dbReference type="PANTHER" id="PTHR24093">
    <property type="entry name" value="CATION TRANSPORTING ATPASE"/>
    <property type="match status" value="1"/>
</dbReference>
<dbReference type="PANTHER" id="PTHR24093:SF377">
    <property type="entry name" value="PLASMA MEMBRANE CALCIUM-TRANSPORTING ATPASE 2"/>
    <property type="match status" value="1"/>
</dbReference>
<dbReference type="Pfam" id="PF13246">
    <property type="entry name" value="Cation_ATPase"/>
    <property type="match status" value="1"/>
</dbReference>
<dbReference type="Pfam" id="PF00689">
    <property type="entry name" value="Cation_ATPase_C"/>
    <property type="match status" value="1"/>
</dbReference>
<dbReference type="Pfam" id="PF00690">
    <property type="entry name" value="Cation_ATPase_N"/>
    <property type="match status" value="1"/>
</dbReference>
<dbReference type="Pfam" id="PF00122">
    <property type="entry name" value="E1-E2_ATPase"/>
    <property type="match status" value="2"/>
</dbReference>
<dbReference type="Pfam" id="PF00702">
    <property type="entry name" value="Hydrolase"/>
    <property type="match status" value="1"/>
</dbReference>
<dbReference type="PRINTS" id="PR00119">
    <property type="entry name" value="CATATPASE"/>
</dbReference>
<dbReference type="PRINTS" id="PR00121">
    <property type="entry name" value="NAKATPASE"/>
</dbReference>
<dbReference type="SFLD" id="SFLDS00003">
    <property type="entry name" value="Haloacid_Dehalogenase"/>
    <property type="match status" value="1"/>
</dbReference>
<dbReference type="SFLD" id="SFLDF00027">
    <property type="entry name" value="p-type_atpase"/>
    <property type="match status" value="1"/>
</dbReference>
<dbReference type="SMART" id="SM00831">
    <property type="entry name" value="Cation_ATPase_N"/>
    <property type="match status" value="1"/>
</dbReference>
<dbReference type="SUPFAM" id="SSF81653">
    <property type="entry name" value="Calcium ATPase, transduction domain A"/>
    <property type="match status" value="1"/>
</dbReference>
<dbReference type="SUPFAM" id="SSF81665">
    <property type="entry name" value="Calcium ATPase, transmembrane domain M"/>
    <property type="match status" value="1"/>
</dbReference>
<dbReference type="SUPFAM" id="SSF56784">
    <property type="entry name" value="HAD-like"/>
    <property type="match status" value="1"/>
</dbReference>
<dbReference type="SUPFAM" id="SSF81660">
    <property type="entry name" value="Metal cation-transporting ATPase, ATP-binding domain N"/>
    <property type="match status" value="1"/>
</dbReference>
<dbReference type="PROSITE" id="PS00154">
    <property type="entry name" value="ATPASE_E1_E2"/>
    <property type="match status" value="1"/>
</dbReference>
<proteinExistence type="evidence at transcript level"/>
<gene>
    <name type="primary">atp2b2</name>
    <name type="synonym">pmca</name>
</gene>
<reference key="1">
    <citation type="submission" date="2000-02" db="EMBL/GenBank/DDBJ databases">
        <title>Partial cDNA sequence of Mozambique tilapia (Oreochromis mossambicus) plasma membrane calcium ATPase (PMCA).</title>
        <authorList>
            <person name="Yang C.-H."/>
            <person name="Leu J.-H."/>
            <person name="Chou C.-M."/>
            <person name="Hwang S.-P.L."/>
            <person name="Huang C.-J."/>
            <person name="Hwang P.-P."/>
        </authorList>
    </citation>
    <scope>NUCLEOTIDE SEQUENCE [MRNA]</scope>
</reference>
<sequence>MGDMSNSDFYAKNQRNEGNHAAAFGCSLMELRSLMELRGTEAVVKLQEDYGGVEGLCKRLKTSPTEGLAGAQTDLDKRKEIFGKNLIPPKKPKTFLQLVWEALQDVTLIILEIAALISLGLSFYHPPGETGGESCGAAAGGVEDEGEADAGWIEGAAILLSVVCVVLVTAFNDWSKEKQFRGLQSRIEQEQKFQVVRGSQVIQLPVADILVGDIAQIKYGDLLPSDGVLIQGNDLKIDESSLTGESDHVKKSADKDPMLLSGTHVMEGSGRMVVTAVGVNSQTGIIFTLLGAGVEEEEKKEKKGGAVEDGHQNTGKMQDGNMESNQIKVKKQDGAAAMEMQPLKSAEGGEADEKERKKVSAPKKEKSVLQGKLTKLAVQIGKAGLLMSAITVIILVLYFAIDNFVMQKRPWMPECTPIYIQYFVKFFIIGVTVLVVAVPEGLPLAVTISLAYSVKKMMKDNNLVRHLDACETMGNATAICSDKTGTLTTNRMTAVQLYVGDVRYKEIPDPGVLPPKSLDLLVNAISINSAYTTKILPPDKEGGLPKQVGNKTECGLLGLVLELKRDYQPIRNQIPEEKLYKVYTFNSVRKSMSTVIKLPDGSFRMYSKGASEIVLKKCSHILNEVGEPRVFRPRDKDEMVKKVIEPMACDGLRTICVAYRDFSSNPEPNWDDENNILNDLTAICVVGIEDPVRPEVPNAIQKCQRAGITVRMVTGANINTARAIAIKCGIIHPGEDFLCIDGKEFNRRIRNEKGEVEQERIDKVWPKLRVLARSSPTDKHTLVKGIIDSTMADQRQVVAVTGDGTNDGPALKKADVGFAMGIAGTDVAKEASDIILTDDNFSSIVKAVMWGRNVYDSISKFLQFQLTVNVVAVIVAFTGACITQDSPLKAVQMLWVNLIMDTFASLALATEPPTESLLKRKPYGRNKPLISSTMTKNILGHGVYQLIIIFTLLFVGEQIFDIDSGRNAPLHSPPSEHYTIIFNTFVMMQLFNEINARKIHGERNVFDGIFRNPIFCSIVFGTFAVQIVIVQFGGKPFSCQPLDLEKWMWCVFLGLGELVWGQVIATIPNSRLRFLRRAGQLTQKDELPEEDVNEENEEIDHAERELRRGQIL</sequence>